<proteinExistence type="inferred from homology"/>
<comment type="function">
    <text>May function in the formation of membrane-bound replication complexes or in the assembly of the virus.</text>
</comment>
<comment type="subcellular location">
    <subcellularLocation>
        <location evidence="2">Host membrane</location>
        <topology evidence="2">Single-pass membrane protein</topology>
    </subcellularLocation>
</comment>
<comment type="similarity">
    <text evidence="2">Belongs to the coronaviruses ns7/ns7a protein family.</text>
</comment>
<feature type="signal peptide" evidence="1">
    <location>
        <begin position="1"/>
        <end position="23"/>
    </location>
</feature>
<feature type="chain" id="PRO_0000106095" description="Non-structural protein 7a">
    <location>
        <begin position="24"/>
        <end position="101"/>
    </location>
</feature>
<feature type="transmembrane region" description="Helical" evidence="1">
    <location>
        <begin position="81"/>
        <end position="101"/>
    </location>
</feature>
<gene>
    <name type="ORF">7a</name>
</gene>
<name>NS7_CVCAI</name>
<organism>
    <name type="scientific">Canine coronavirus (strain Insavc-1)</name>
    <name type="common">CCoV</name>
    <name type="synonym">Canine enteric coronavirus</name>
    <dbReference type="NCBI Taxonomy" id="36391"/>
    <lineage>
        <taxon>Viruses</taxon>
        <taxon>Riboviria</taxon>
        <taxon>Orthornavirae</taxon>
        <taxon>Pisuviricota</taxon>
        <taxon>Pisoniviricetes</taxon>
        <taxon>Nidovirales</taxon>
        <taxon>Cornidovirineae</taxon>
        <taxon>Coronaviridae</taxon>
        <taxon>Orthocoronavirinae</taxon>
        <taxon>Alphacoronavirus</taxon>
        <taxon>Tegacovirus</taxon>
        <taxon>Alphacoronavirus 1</taxon>
    </lineage>
</organism>
<evidence type="ECO:0000255" key="1"/>
<evidence type="ECO:0000305" key="2"/>
<reference key="1">
    <citation type="journal article" date="1992" name="J. Gen. Virol.">
        <title>Analysis of a 9.6 kb sequence from the 3' end of canine coronavirus genomic RNA.</title>
        <authorList>
            <person name="Horsburgh B.C."/>
            <person name="Brierley I."/>
            <person name="Brown T.D.K."/>
        </authorList>
    </citation>
    <scope>NUCLEOTIDE SEQUENCE [GENOMIC RNA]</scope>
</reference>
<accession>P36301</accession>
<keyword id="KW-1043">Host membrane</keyword>
<keyword id="KW-0472">Membrane</keyword>
<keyword id="KW-0732">Signal</keyword>
<keyword id="KW-0812">Transmembrane</keyword>
<keyword id="KW-1133">Transmembrane helix</keyword>
<protein>
    <recommendedName>
        <fullName>Non-structural protein 7a</fullName>
        <shortName>ns7a</shortName>
    </recommendedName>
    <alternativeName>
        <fullName>11 kDa protein</fullName>
    </alternativeName>
    <alternativeName>
        <fullName>Accessory protein 7a</fullName>
    </alternativeName>
    <alternativeName>
        <fullName>X3 protein</fullName>
    </alternativeName>
</protein>
<organismHost>
    <name type="scientific">Canis lupus familiaris</name>
    <name type="common">Dog</name>
    <name type="synonym">Canis familiaris</name>
    <dbReference type="NCBI Taxonomy" id="9615"/>
</organismHost>
<dbReference type="EMBL" id="D13096">
    <property type="protein sequence ID" value="BAA02415.1"/>
    <property type="status" value="ALT_SEQ"/>
    <property type="molecule type" value="Genomic_RNA"/>
</dbReference>
<dbReference type="PIR" id="JQ1726">
    <property type="entry name" value="JQ1726"/>
</dbReference>
<dbReference type="GO" id="GO:0033644">
    <property type="term" value="C:host cell membrane"/>
    <property type="evidence" value="ECO:0007669"/>
    <property type="project" value="UniProtKB-SubCell"/>
</dbReference>
<dbReference type="GO" id="GO:0016020">
    <property type="term" value="C:membrane"/>
    <property type="evidence" value="ECO:0007669"/>
    <property type="project" value="UniProtKB-KW"/>
</dbReference>
<dbReference type="InterPro" id="IPR003449">
    <property type="entry name" value="Corona_7"/>
</dbReference>
<dbReference type="Pfam" id="PF02398">
    <property type="entry name" value="Corona_7"/>
    <property type="match status" value="1"/>
</dbReference>
<sequence length="101" mass="11547">MLVFLHAVFITVLILLLIGRLQLLERLLLNHSLNLKTVNNVLGVTHTGLKVNCLQLLKPDCLDFNILHRSLAETRLLKVVLRVIFLVLLGFCCYRLLVTLF</sequence>